<sequence length="677" mass="76457">MYSQTHQGQHVLMNGGQAHQRFGMQIPKFQSQGHHHPAQQPHHHAHHNQATHNITHQHNFSSGALAAATPHFTPSHMQNGAHANVDEDIDESMNEHWQQQLQLAAESRQASSPHYYARAVAQQTKGIQIAPSQPDGQENGTDNRNGTVKTKSKPRQGWHALDFGGQGLRALSTSLFNYVFLEKLYLNHNKLKALPQTIGQLRKLEHLDLSGNDLTELPEEIGMLTSLKKLYLFDNNIRTLPYEMGYLYRLDTLGIEGNPLNDILKSQIMKEGTKALIRYLREEMPVHLPPPDRDWVILDDTSSSTEKVTVLSHNALCDSSATSSHFGYTPSRALSWEFRRELILSELRSHDSDIVCLQEVDQGSYNGFFREQLAYNDYKGVYWPRGRAMGMQEEEAKNVDGCATFFKGSKFILLDKQMINFGQTAVRRPDAKGQDDIYNRLWQKDHIAVVVFLENRLTGSRFIVVNAHLYWDPAFKDVKLIQTAILMEEITKLSDGYAKWPPCTDKTAFRFSEAEGGGESENQPEPAPSMEYASGDQIPLFMCGDFNSSPGSAAYNLIANGRLTEEHPDLEKRLYGNLSRVGMTHPFKLKSAYGSIGELSFTNYTPDFKDILDYIWYTSNTLHVSALLGEVDKDYLQKVPGFPNFHFPSDHIALFAEFSVKGKKGKVVEADFGPQRS</sequence>
<feature type="chain" id="PRO_0000290606" description="CCR4-Not complex 3'-5'-exoribonuclease subunit Ccr4">
    <location>
        <begin position="1"/>
        <end position="677"/>
    </location>
</feature>
<feature type="repeat" description="LRR 1">
    <location>
        <begin position="180"/>
        <end position="201"/>
    </location>
</feature>
<feature type="repeat" description="LRR 2">
    <location>
        <begin position="203"/>
        <end position="224"/>
    </location>
</feature>
<feature type="repeat" description="LRR 3">
    <location>
        <begin position="226"/>
        <end position="247"/>
    </location>
</feature>
<feature type="repeat" description="LRR 4">
    <location>
        <begin position="249"/>
        <end position="270"/>
    </location>
</feature>
<feature type="region of interest" description="Disordered" evidence="4">
    <location>
        <begin position="30"/>
        <end position="49"/>
    </location>
</feature>
<feature type="region of interest" description="Disordered" evidence="4">
    <location>
        <begin position="128"/>
        <end position="155"/>
    </location>
</feature>
<feature type="compositionally biased region" description="Basic residues" evidence="4">
    <location>
        <begin position="33"/>
        <end position="49"/>
    </location>
</feature>
<feature type="compositionally biased region" description="Polar residues" evidence="4">
    <location>
        <begin position="128"/>
        <end position="149"/>
    </location>
</feature>
<feature type="binding site" evidence="2">
    <location>
        <position position="359"/>
    </location>
    <ligand>
        <name>Mg(2+)</name>
        <dbReference type="ChEBI" id="CHEBI:18420"/>
    </ligand>
</feature>
<comment type="function">
    <text evidence="3">Acts as a catalytic component of the CCR4-NOT core complex, which in the nucleus seems to be a general transcription factor, and in the cytoplasm the major mRNA deadenylase involved in mRNA turnover (By similarity). Ccr4 has 3'-5' RNase activity with a strong preference for polyadenylated substrates and also low exonuclease activity towards single-stranded DNA (By similarity).</text>
</comment>
<comment type="catalytic activity">
    <reaction>
        <text>Exonucleolytic cleavage of poly(A) to 5'-AMP.</text>
        <dbReference type="EC" id="3.1.13.4"/>
    </reaction>
</comment>
<comment type="cofactor">
    <cofactor evidence="1">
        <name>Mg(2+)</name>
        <dbReference type="ChEBI" id="CHEBI:18420"/>
    </cofactor>
</comment>
<comment type="subcellular location">
    <subcellularLocation>
        <location evidence="1">Cytoplasm</location>
    </subcellularLocation>
    <subcellularLocation>
        <location evidence="1">Nucleus</location>
    </subcellularLocation>
</comment>
<comment type="similarity">
    <text evidence="5">Belongs to the CCR4/nocturin family.</text>
</comment>
<name>CCR4_ASPTN</name>
<keyword id="KW-0963">Cytoplasm</keyword>
<keyword id="KW-0269">Exonuclease</keyword>
<keyword id="KW-0378">Hydrolase</keyword>
<keyword id="KW-0433">Leucine-rich repeat</keyword>
<keyword id="KW-0460">Magnesium</keyword>
<keyword id="KW-0479">Metal-binding</keyword>
<keyword id="KW-0540">Nuclease</keyword>
<keyword id="KW-0539">Nucleus</keyword>
<keyword id="KW-1185">Reference proteome</keyword>
<keyword id="KW-0677">Repeat</keyword>
<keyword id="KW-0694">RNA-binding</keyword>
<keyword id="KW-0804">Transcription</keyword>
<keyword id="KW-0805">Transcription regulation</keyword>
<proteinExistence type="inferred from homology"/>
<evidence type="ECO:0000250" key="1"/>
<evidence type="ECO:0000250" key="2">
    <source>
        <dbReference type="UniProtKB" id="O95551"/>
    </source>
</evidence>
<evidence type="ECO:0000250" key="3">
    <source>
        <dbReference type="UniProtKB" id="P31384"/>
    </source>
</evidence>
<evidence type="ECO:0000256" key="4">
    <source>
        <dbReference type="SAM" id="MobiDB-lite"/>
    </source>
</evidence>
<evidence type="ECO:0000305" key="5"/>
<organism>
    <name type="scientific">Aspergillus terreus (strain NIH 2624 / FGSC A1156)</name>
    <dbReference type="NCBI Taxonomy" id="341663"/>
    <lineage>
        <taxon>Eukaryota</taxon>
        <taxon>Fungi</taxon>
        <taxon>Dikarya</taxon>
        <taxon>Ascomycota</taxon>
        <taxon>Pezizomycotina</taxon>
        <taxon>Eurotiomycetes</taxon>
        <taxon>Eurotiomycetidae</taxon>
        <taxon>Eurotiales</taxon>
        <taxon>Aspergillaceae</taxon>
        <taxon>Aspergillus</taxon>
        <taxon>Aspergillus subgen. Circumdati</taxon>
    </lineage>
</organism>
<gene>
    <name type="primary">ccr4</name>
    <name type="ORF">ATEG_03157</name>
</gene>
<reference key="1">
    <citation type="submission" date="2005-09" db="EMBL/GenBank/DDBJ databases">
        <title>Annotation of the Aspergillus terreus NIH2624 genome.</title>
        <authorList>
            <person name="Birren B.W."/>
            <person name="Lander E.S."/>
            <person name="Galagan J.E."/>
            <person name="Nusbaum C."/>
            <person name="Devon K."/>
            <person name="Henn M."/>
            <person name="Ma L.-J."/>
            <person name="Jaffe D.B."/>
            <person name="Butler J."/>
            <person name="Alvarez P."/>
            <person name="Gnerre S."/>
            <person name="Grabherr M."/>
            <person name="Kleber M."/>
            <person name="Mauceli E.W."/>
            <person name="Brockman W."/>
            <person name="Rounsley S."/>
            <person name="Young S.K."/>
            <person name="LaButti K."/>
            <person name="Pushparaj V."/>
            <person name="DeCaprio D."/>
            <person name="Crawford M."/>
            <person name="Koehrsen M."/>
            <person name="Engels R."/>
            <person name="Montgomery P."/>
            <person name="Pearson M."/>
            <person name="Howarth C."/>
            <person name="Larson L."/>
            <person name="Luoma S."/>
            <person name="White J."/>
            <person name="Alvarado L."/>
            <person name="Kodira C.D."/>
            <person name="Zeng Q."/>
            <person name="Oleary S."/>
            <person name="Yandava C."/>
            <person name="Denning D.W."/>
            <person name="Nierman W.C."/>
            <person name="Milne T."/>
            <person name="Madden K."/>
        </authorList>
    </citation>
    <scope>NUCLEOTIDE SEQUENCE [LARGE SCALE GENOMIC DNA]</scope>
    <source>
        <strain>NIH 2624 / FGSC A1156</strain>
    </source>
</reference>
<protein>
    <recommendedName>
        <fullName evidence="5">CCR4-Not complex 3'-5'-exoribonuclease subunit Ccr4</fullName>
        <ecNumber>3.1.13.4</ecNumber>
    </recommendedName>
    <alternativeName>
        <fullName>Carbon catabolite repressor protein 4</fullName>
    </alternativeName>
    <alternativeName>
        <fullName>Cytoplasmic deadenylase</fullName>
    </alternativeName>
    <alternativeName>
        <fullName>Glucose-repressible alcohol dehydrogenase transcriptional effector</fullName>
    </alternativeName>
</protein>
<accession>Q0CT27</accession>
<dbReference type="EC" id="3.1.13.4"/>
<dbReference type="EMBL" id="CH476597">
    <property type="protein sequence ID" value="EAU36431.1"/>
    <property type="molecule type" value="Genomic_DNA"/>
</dbReference>
<dbReference type="RefSeq" id="XP_001212335.1">
    <property type="nucleotide sequence ID" value="XM_001212335.1"/>
</dbReference>
<dbReference type="SMR" id="Q0CT27"/>
<dbReference type="STRING" id="341663.Q0CT27"/>
<dbReference type="EnsemblFungi" id="EAU36431">
    <property type="protein sequence ID" value="EAU36431"/>
    <property type="gene ID" value="ATEG_03157"/>
</dbReference>
<dbReference type="GeneID" id="4317897"/>
<dbReference type="VEuPathDB" id="FungiDB:ATEG_03157"/>
<dbReference type="eggNOG" id="KOG0620">
    <property type="taxonomic scope" value="Eukaryota"/>
</dbReference>
<dbReference type="HOGENOM" id="CLU_016428_4_0_1"/>
<dbReference type="OMA" id="PHYYARA"/>
<dbReference type="OrthoDB" id="428734at2759"/>
<dbReference type="Proteomes" id="UP000007963">
    <property type="component" value="Unassembled WGS sequence"/>
</dbReference>
<dbReference type="GO" id="GO:0030015">
    <property type="term" value="C:CCR4-NOT core complex"/>
    <property type="evidence" value="ECO:0007669"/>
    <property type="project" value="EnsemblFungi"/>
</dbReference>
<dbReference type="GO" id="GO:0016593">
    <property type="term" value="C:Cdc73/Paf1 complex"/>
    <property type="evidence" value="ECO:0007669"/>
    <property type="project" value="EnsemblFungi"/>
</dbReference>
<dbReference type="GO" id="GO:0000932">
    <property type="term" value="C:P-body"/>
    <property type="evidence" value="ECO:0007669"/>
    <property type="project" value="EnsemblFungi"/>
</dbReference>
<dbReference type="GO" id="GO:0046872">
    <property type="term" value="F:metal ion binding"/>
    <property type="evidence" value="ECO:0007669"/>
    <property type="project" value="UniProtKB-KW"/>
</dbReference>
<dbReference type="GO" id="GO:0004535">
    <property type="term" value="F:poly(A)-specific ribonuclease activity"/>
    <property type="evidence" value="ECO:0007669"/>
    <property type="project" value="UniProtKB-EC"/>
</dbReference>
<dbReference type="GO" id="GO:0003723">
    <property type="term" value="F:RNA binding"/>
    <property type="evidence" value="ECO:0007669"/>
    <property type="project" value="UniProtKB-KW"/>
</dbReference>
<dbReference type="GO" id="GO:0006260">
    <property type="term" value="P:DNA replication"/>
    <property type="evidence" value="ECO:0007669"/>
    <property type="project" value="EnsemblFungi"/>
</dbReference>
<dbReference type="GO" id="GO:0000076">
    <property type="term" value="P:DNA replication checkpoint signaling"/>
    <property type="evidence" value="ECO:0007669"/>
    <property type="project" value="EnsemblFungi"/>
</dbReference>
<dbReference type="GO" id="GO:0000289">
    <property type="term" value="P:nuclear-transcribed mRNA poly(A) tail shortening"/>
    <property type="evidence" value="ECO:0007669"/>
    <property type="project" value="EnsemblFungi"/>
</dbReference>
<dbReference type="GO" id="GO:0032968">
    <property type="term" value="P:positive regulation of transcription elongation by RNA polymerase II"/>
    <property type="evidence" value="ECO:0007669"/>
    <property type="project" value="EnsemblFungi"/>
</dbReference>
<dbReference type="GO" id="GO:0006368">
    <property type="term" value="P:transcription elongation by RNA polymerase II"/>
    <property type="evidence" value="ECO:0007669"/>
    <property type="project" value="EnsemblFungi"/>
</dbReference>
<dbReference type="GO" id="GO:0007089">
    <property type="term" value="P:traversing start control point of mitotic cell cycle"/>
    <property type="evidence" value="ECO:0007669"/>
    <property type="project" value="EnsemblFungi"/>
</dbReference>
<dbReference type="CDD" id="cd09097">
    <property type="entry name" value="Deadenylase_CCR4"/>
    <property type="match status" value="1"/>
</dbReference>
<dbReference type="FunFam" id="3.60.10.10:FF:000037">
    <property type="entry name" value="Glucose-repressible alcohol dehydrogenase transcriptional effector"/>
    <property type="match status" value="1"/>
</dbReference>
<dbReference type="FunFam" id="3.80.10.10:FF:000447">
    <property type="entry name" value="Glucose-repressible alcohol dehydrogenase transcriptional effector"/>
    <property type="match status" value="1"/>
</dbReference>
<dbReference type="Gene3D" id="3.60.10.10">
    <property type="entry name" value="Endonuclease/exonuclease/phosphatase"/>
    <property type="match status" value="1"/>
</dbReference>
<dbReference type="Gene3D" id="3.80.10.10">
    <property type="entry name" value="Ribonuclease Inhibitor"/>
    <property type="match status" value="1"/>
</dbReference>
<dbReference type="InterPro" id="IPR050410">
    <property type="entry name" value="CCR4/nocturin_mRNA_transcr"/>
</dbReference>
<dbReference type="InterPro" id="IPR036691">
    <property type="entry name" value="Endo/exonu/phosph_ase_sf"/>
</dbReference>
<dbReference type="InterPro" id="IPR005135">
    <property type="entry name" value="Endo/exonuclease/phosphatase"/>
</dbReference>
<dbReference type="InterPro" id="IPR001611">
    <property type="entry name" value="Leu-rich_rpt"/>
</dbReference>
<dbReference type="InterPro" id="IPR003591">
    <property type="entry name" value="Leu-rich_rpt_typical-subtyp"/>
</dbReference>
<dbReference type="InterPro" id="IPR032675">
    <property type="entry name" value="LRR_dom_sf"/>
</dbReference>
<dbReference type="InterPro" id="IPR055414">
    <property type="entry name" value="LRR_R13L4/SHOC2-like"/>
</dbReference>
<dbReference type="PANTHER" id="PTHR12121">
    <property type="entry name" value="CARBON CATABOLITE REPRESSOR PROTEIN 4"/>
    <property type="match status" value="1"/>
</dbReference>
<dbReference type="PANTHER" id="PTHR12121:SF100">
    <property type="entry name" value="POLY(A)-SPECIFIC RIBONUCLEASE"/>
    <property type="match status" value="1"/>
</dbReference>
<dbReference type="Pfam" id="PF03372">
    <property type="entry name" value="Exo_endo_phos"/>
    <property type="match status" value="1"/>
</dbReference>
<dbReference type="Pfam" id="PF23598">
    <property type="entry name" value="LRR_14"/>
    <property type="match status" value="1"/>
</dbReference>
<dbReference type="SMART" id="SM00369">
    <property type="entry name" value="LRR_TYP"/>
    <property type="match status" value="3"/>
</dbReference>
<dbReference type="SUPFAM" id="SSF56219">
    <property type="entry name" value="DNase I-like"/>
    <property type="match status" value="1"/>
</dbReference>
<dbReference type="SUPFAM" id="SSF52058">
    <property type="entry name" value="L domain-like"/>
    <property type="match status" value="1"/>
</dbReference>
<dbReference type="PROSITE" id="PS51450">
    <property type="entry name" value="LRR"/>
    <property type="match status" value="4"/>
</dbReference>